<reference key="1">
    <citation type="submission" date="2007-03" db="EMBL/GenBank/DDBJ databases">
        <authorList>
            <consortium name="NIH - Xenopus Gene Collection (XGC) project"/>
        </authorList>
    </citation>
    <scope>NUCLEOTIDE SEQUENCE [LARGE SCALE MRNA]</scope>
    <source>
        <tissue>Embryo</tissue>
    </source>
</reference>
<gene>
    <name type="primary">lamp5</name>
</gene>
<feature type="signal peptide" evidence="3">
    <location>
        <begin position="1"/>
        <end position="27"/>
    </location>
</feature>
<feature type="chain" id="PRO_0000360416" description="Lysosome-associated membrane glycoprotein 5">
    <location>
        <begin position="28"/>
        <end position="276"/>
    </location>
</feature>
<feature type="topological domain" description="Extracellular" evidence="3">
    <location>
        <begin position="28"/>
        <end position="231"/>
    </location>
</feature>
<feature type="transmembrane region" description="Helical" evidence="3">
    <location>
        <begin position="232"/>
        <end position="252"/>
    </location>
</feature>
<feature type="topological domain" description="Cytoplasmic" evidence="3">
    <location>
        <begin position="253"/>
        <end position="276"/>
    </location>
</feature>
<feature type="glycosylation site" description="N-linked (GlcNAc...) asparagine" evidence="3">
    <location>
        <position position="33"/>
    </location>
</feature>
<feature type="glycosylation site" description="N-linked (GlcNAc...) asparagine" evidence="3">
    <location>
        <position position="51"/>
    </location>
</feature>
<feature type="glycosylation site" description="N-linked (GlcNAc...) asparagine" evidence="3">
    <location>
        <position position="100"/>
    </location>
</feature>
<proteinExistence type="evidence at transcript level"/>
<keyword id="KW-1003">Cell membrane</keyword>
<keyword id="KW-0966">Cell projection</keyword>
<keyword id="KW-0968">Cytoplasmic vesicle</keyword>
<keyword id="KW-0967">Endosome</keyword>
<keyword id="KW-0325">Glycoprotein</keyword>
<keyword id="KW-0472">Membrane</keyword>
<keyword id="KW-1185">Reference proteome</keyword>
<keyword id="KW-0732">Signal</keyword>
<keyword id="KW-0770">Synapse</keyword>
<keyword id="KW-0812">Transmembrane</keyword>
<keyword id="KW-1133">Transmembrane helix</keyword>
<sequence>MDYRACTSALRMPVLLLLLCTFSCNLAEQEVENLSGLSSNPDKNIFAIRENGTTCLMAEFSARILVPYEVPSSNEVDWDLEEASIQLPRDTEIRGKCWNNESELHLSWLDKAYTLKLFFSKEGQDASKSRSWKMSKIQFLYDPSEHTIFKSGARPGRHTANSHHLSLMVTPAGMSYECEATQRISLTSTDHQKIVVLYLSEVHLQPFDIKSDFVYSEEYKCPTDQRKQLEETLPLILGLTLGVAILIIVAVYHIHHKMTANQVQIPRDRSLYKHMG</sequence>
<organism>
    <name type="scientific">Xenopus tropicalis</name>
    <name type="common">Western clawed frog</name>
    <name type="synonym">Silurana tropicalis</name>
    <dbReference type="NCBI Taxonomy" id="8364"/>
    <lineage>
        <taxon>Eukaryota</taxon>
        <taxon>Metazoa</taxon>
        <taxon>Chordata</taxon>
        <taxon>Craniata</taxon>
        <taxon>Vertebrata</taxon>
        <taxon>Euteleostomi</taxon>
        <taxon>Amphibia</taxon>
        <taxon>Batrachia</taxon>
        <taxon>Anura</taxon>
        <taxon>Pipoidea</taxon>
        <taxon>Pipidae</taxon>
        <taxon>Xenopodinae</taxon>
        <taxon>Xenopus</taxon>
        <taxon>Silurana</taxon>
    </lineage>
</organism>
<protein>
    <recommendedName>
        <fullName>Lysosome-associated membrane glycoprotein 5</fullName>
    </recommendedName>
    <alternativeName>
        <fullName>Lysosome-associated membrane protein 5</fullName>
        <shortName>LAMP-5</shortName>
    </alternativeName>
</protein>
<accession>A4IGL3</accession>
<evidence type="ECO:0000250" key="1">
    <source>
        <dbReference type="UniProtKB" id="Q9D387"/>
    </source>
</evidence>
<evidence type="ECO:0000250" key="2">
    <source>
        <dbReference type="UniProtKB" id="Q9UJQ1"/>
    </source>
</evidence>
<evidence type="ECO:0000255" key="3"/>
<evidence type="ECO:0000305" key="4"/>
<comment type="function">
    <text evidence="1">Plays a role in short-term synaptic plasticity in a subset of GABAergic neurons in the brain.</text>
</comment>
<comment type="subcellular location">
    <subcellularLocation>
        <location evidence="1">Cytoplasmic vesicle membrane</location>
        <topology evidence="1">Single-pass type I membrane protein</topology>
    </subcellularLocation>
    <subcellularLocation>
        <location evidence="1">Cell membrane</location>
        <topology evidence="1">Single-pass type I membrane protein</topology>
    </subcellularLocation>
    <subcellularLocation>
        <location evidence="1">Cell projection</location>
        <location evidence="1">Dendrite</location>
    </subcellularLocation>
    <subcellularLocation>
        <location evidence="1">Cytoplasmic vesicle</location>
        <location evidence="1">Secretory vesicle</location>
        <location evidence="1">Synaptic vesicle membrane</location>
        <topology evidence="1">Single-pass type I membrane protein</topology>
    </subcellularLocation>
    <subcellularLocation>
        <location evidence="1">Cell projection</location>
        <location evidence="1">Growth cone membrane</location>
        <topology evidence="1">Single-pass type I membrane protein</topology>
    </subcellularLocation>
    <subcellularLocation>
        <location evidence="1">Early endosome membrane</location>
        <topology evidence="1">Single-pass type I membrane protein</topology>
    </subcellularLocation>
    <subcellularLocation>
        <location evidence="1">Recycling endosome</location>
    </subcellularLocation>
    <subcellularLocation>
        <location evidence="2">Endoplasmic reticulum-Golgi intermediate compartment membrane</location>
        <topology evidence="1">Single-pass type I membrane protein</topology>
    </subcellularLocation>
    <subcellularLocation>
        <location evidence="2">Endosome membrane</location>
        <topology evidence="1">Single-pass type I membrane protein</topology>
    </subcellularLocation>
</comment>
<comment type="PTM">
    <text evidence="1">Glycosylated.</text>
</comment>
<comment type="similarity">
    <text evidence="4">Belongs to the LAMP family.</text>
</comment>
<name>LAMP5_XENTR</name>
<dbReference type="EMBL" id="BC135151">
    <property type="protein sequence ID" value="AAI35152.1"/>
    <property type="molecule type" value="mRNA"/>
</dbReference>
<dbReference type="RefSeq" id="NP_001090781.1">
    <property type="nucleotide sequence ID" value="NM_001097312.1"/>
</dbReference>
<dbReference type="RefSeq" id="XP_012817987.1">
    <property type="nucleotide sequence ID" value="XM_012962533.3"/>
</dbReference>
<dbReference type="SMR" id="A4IGL3"/>
<dbReference type="FunCoup" id="A4IGL3">
    <property type="interactions" value="324"/>
</dbReference>
<dbReference type="STRING" id="8364.ENSXETP00000019740"/>
<dbReference type="GlyCosmos" id="A4IGL3">
    <property type="glycosylation" value="3 sites, No reported glycans"/>
</dbReference>
<dbReference type="PaxDb" id="8364-ENSXETP00000033005"/>
<dbReference type="DNASU" id="100037871"/>
<dbReference type="GeneID" id="100037871"/>
<dbReference type="KEGG" id="xtr:100037871"/>
<dbReference type="AGR" id="Xenbase:XB-GENE-941198"/>
<dbReference type="CTD" id="24141"/>
<dbReference type="Xenbase" id="XB-GENE-941198">
    <property type="gene designation" value="lamp5"/>
</dbReference>
<dbReference type="eggNOG" id="KOG4818">
    <property type="taxonomic scope" value="Eukaryota"/>
</dbReference>
<dbReference type="HOGENOM" id="CLU_090529_0_0_1"/>
<dbReference type="InParanoid" id="A4IGL3"/>
<dbReference type="OMA" id="CSQVRMA"/>
<dbReference type="OrthoDB" id="6248302at2759"/>
<dbReference type="PhylomeDB" id="A4IGL3"/>
<dbReference type="TreeFam" id="TF330776"/>
<dbReference type="Proteomes" id="UP000008143">
    <property type="component" value="Chromosome 5"/>
</dbReference>
<dbReference type="Bgee" id="ENSXETG00000015086">
    <property type="expression patterns" value="Expressed in brain and 1 other cell type or tissue"/>
</dbReference>
<dbReference type="GO" id="GO:0030659">
    <property type="term" value="C:cytoplasmic vesicle membrane"/>
    <property type="evidence" value="ECO:0000250"/>
    <property type="project" value="UniProtKB"/>
</dbReference>
<dbReference type="GO" id="GO:0032590">
    <property type="term" value="C:dendrite membrane"/>
    <property type="evidence" value="ECO:0000250"/>
    <property type="project" value="UniProtKB"/>
</dbReference>
<dbReference type="GO" id="GO:0031901">
    <property type="term" value="C:early endosome membrane"/>
    <property type="evidence" value="ECO:0000250"/>
    <property type="project" value="UniProtKB"/>
</dbReference>
<dbReference type="GO" id="GO:0033116">
    <property type="term" value="C:endoplasmic reticulum-Golgi intermediate compartment membrane"/>
    <property type="evidence" value="ECO:0000250"/>
    <property type="project" value="UniProtKB"/>
</dbReference>
<dbReference type="GO" id="GO:0010008">
    <property type="term" value="C:endosome membrane"/>
    <property type="evidence" value="ECO:0000250"/>
    <property type="project" value="UniProtKB"/>
</dbReference>
<dbReference type="GO" id="GO:0032584">
    <property type="term" value="C:growth cone membrane"/>
    <property type="evidence" value="ECO:0000250"/>
    <property type="project" value="UniProtKB"/>
</dbReference>
<dbReference type="GO" id="GO:0005886">
    <property type="term" value="C:plasma membrane"/>
    <property type="evidence" value="ECO:0000250"/>
    <property type="project" value="UniProtKB"/>
</dbReference>
<dbReference type="GO" id="GO:0055038">
    <property type="term" value="C:recycling endosome membrane"/>
    <property type="evidence" value="ECO:0000250"/>
    <property type="project" value="UniProtKB"/>
</dbReference>
<dbReference type="GO" id="GO:0030672">
    <property type="term" value="C:synaptic vesicle membrane"/>
    <property type="evidence" value="ECO:0007669"/>
    <property type="project" value="UniProtKB-SubCell"/>
</dbReference>
<dbReference type="FunFam" id="2.40.160.110:FF:000002">
    <property type="entry name" value="lysosome-associated membrane glycoprotein 5 isoform X1"/>
    <property type="match status" value="1"/>
</dbReference>
<dbReference type="Gene3D" id="2.40.160.110">
    <property type="match status" value="1"/>
</dbReference>
<dbReference type="InterPro" id="IPR048528">
    <property type="entry name" value="Lamp2-like_luminal"/>
</dbReference>
<dbReference type="InterPro" id="IPR002000">
    <property type="entry name" value="Lysosome-assoc_membr_glycop"/>
</dbReference>
<dbReference type="PANTHER" id="PTHR11506">
    <property type="entry name" value="LYSOSOME-ASSOCIATED MEMBRANE GLYCOPROTEIN"/>
    <property type="match status" value="1"/>
</dbReference>
<dbReference type="PANTHER" id="PTHR11506:SF35">
    <property type="entry name" value="LYSOSOME-ASSOCIATED MEMBRANE GLYCOPROTEIN 5"/>
    <property type="match status" value="1"/>
</dbReference>
<dbReference type="Pfam" id="PF01299">
    <property type="entry name" value="Lamp2-like_luminal"/>
    <property type="match status" value="1"/>
</dbReference>
<dbReference type="PROSITE" id="PS00310">
    <property type="entry name" value="LAMP_1"/>
    <property type="match status" value="1"/>
</dbReference>